<accession>P21716</accession>
<organism>
    <name type="scientific">Akodon juninensis</name>
    <name type="common">Junin grass mouse</name>
    <dbReference type="NCBI Taxonomy" id="10073"/>
    <lineage>
        <taxon>Eukaryota</taxon>
        <taxon>Metazoa</taxon>
        <taxon>Chordata</taxon>
        <taxon>Craniata</taxon>
        <taxon>Vertebrata</taxon>
        <taxon>Euteleostomi</taxon>
        <taxon>Mammalia</taxon>
        <taxon>Eutheria</taxon>
        <taxon>Euarchontoglires</taxon>
        <taxon>Glires</taxon>
        <taxon>Rodentia</taxon>
        <taxon>Myomorpha</taxon>
        <taxon>Muroidea</taxon>
        <taxon>Cricetidae</taxon>
        <taxon>Sigmodontinae</taxon>
        <taxon>Akodon</taxon>
    </lineage>
</organism>
<evidence type="ECO:0000250" key="1"/>
<evidence type="ECO:0000250" key="2">
    <source>
        <dbReference type="UniProtKB" id="P00157"/>
    </source>
</evidence>
<evidence type="ECO:0000255" key="3">
    <source>
        <dbReference type="PROSITE-ProRule" id="PRU00967"/>
    </source>
</evidence>
<evidence type="ECO:0000255" key="4">
    <source>
        <dbReference type="PROSITE-ProRule" id="PRU00968"/>
    </source>
</evidence>
<name>CYB_AKOJU</name>
<proteinExistence type="inferred from homology"/>
<feature type="chain" id="PRO_0000060547" description="Cytochrome b">
    <location>
        <begin position="1"/>
        <end position="379"/>
    </location>
</feature>
<feature type="transmembrane region" description="Helical" evidence="2">
    <location>
        <begin position="33"/>
        <end position="53"/>
    </location>
</feature>
<feature type="transmembrane region" description="Helical" evidence="2">
    <location>
        <begin position="77"/>
        <end position="98"/>
    </location>
</feature>
<feature type="transmembrane region" description="Helical" evidence="2">
    <location>
        <begin position="113"/>
        <end position="133"/>
    </location>
</feature>
<feature type="transmembrane region" description="Helical" evidence="2">
    <location>
        <begin position="178"/>
        <end position="198"/>
    </location>
</feature>
<feature type="transmembrane region" description="Helical" evidence="2">
    <location>
        <begin position="226"/>
        <end position="246"/>
    </location>
</feature>
<feature type="transmembrane region" description="Helical" evidence="2">
    <location>
        <begin position="288"/>
        <end position="308"/>
    </location>
</feature>
<feature type="transmembrane region" description="Helical" evidence="2">
    <location>
        <begin position="320"/>
        <end position="340"/>
    </location>
</feature>
<feature type="transmembrane region" description="Helical" evidence="2">
    <location>
        <begin position="347"/>
        <end position="367"/>
    </location>
</feature>
<feature type="binding site" description="axial binding residue" evidence="2">
    <location>
        <position position="83"/>
    </location>
    <ligand>
        <name>heme b</name>
        <dbReference type="ChEBI" id="CHEBI:60344"/>
        <label>b562</label>
    </ligand>
    <ligandPart>
        <name>Fe</name>
        <dbReference type="ChEBI" id="CHEBI:18248"/>
    </ligandPart>
</feature>
<feature type="binding site" description="axial binding residue" evidence="2">
    <location>
        <position position="97"/>
    </location>
    <ligand>
        <name>heme b</name>
        <dbReference type="ChEBI" id="CHEBI:60344"/>
        <label>b566</label>
    </ligand>
    <ligandPart>
        <name>Fe</name>
        <dbReference type="ChEBI" id="CHEBI:18248"/>
    </ligandPart>
</feature>
<feature type="binding site" description="axial binding residue" evidence="2">
    <location>
        <position position="182"/>
    </location>
    <ligand>
        <name>heme b</name>
        <dbReference type="ChEBI" id="CHEBI:60344"/>
        <label>b562</label>
    </ligand>
    <ligandPart>
        <name>Fe</name>
        <dbReference type="ChEBI" id="CHEBI:18248"/>
    </ligandPart>
</feature>
<feature type="binding site" description="axial binding residue" evidence="2">
    <location>
        <position position="196"/>
    </location>
    <ligand>
        <name>heme b</name>
        <dbReference type="ChEBI" id="CHEBI:60344"/>
        <label>b566</label>
    </ligand>
    <ligandPart>
        <name>Fe</name>
        <dbReference type="ChEBI" id="CHEBI:18248"/>
    </ligandPart>
</feature>
<feature type="binding site" evidence="2">
    <location>
        <position position="201"/>
    </location>
    <ligand>
        <name>a ubiquinone</name>
        <dbReference type="ChEBI" id="CHEBI:16389"/>
    </ligand>
</feature>
<reference key="1">
    <citation type="submission" date="2003-12" db="EMBL/GenBank/DDBJ databases">
        <title>Molecular phylogenetics and diversification of South American grass mice, genus Akodon.</title>
        <authorList>
            <person name="Smith M.F."/>
            <person name="Patton J.L."/>
        </authorList>
    </citation>
    <scope>NUCLEOTIDE SEQUENCE [GENOMIC DNA]</scope>
    <source>
        <strain>Isolate MVZ 173038</strain>
        <tissue>Liver</tissue>
    </source>
</reference>
<reference key="2">
    <citation type="journal article" date="1993" name="Biol. J. Linn. Soc. Lond.">
        <title>The diversification of South American murid rodents: evidence from mitochondrial DNA sequence data for the akodontine tribe.</title>
        <authorList>
            <person name="Smith M.F."/>
            <person name="Patton J.L."/>
        </authorList>
    </citation>
    <scope>NUCLEOTIDE SEQUENCE [GENOMIC DNA] OF 1-267</scope>
    <source>
        <strain>Isolate MVZ 173038</strain>
        <tissue>Liver</tissue>
    </source>
</reference>
<reference key="3">
    <citation type="journal article" date="1991" name="Mol. Biol. Evol.">
        <title>Variation in mitochondrial cytochrome b sequence in natural populations of South American akodontine rodents (Muridae: Sigmodontinae).</title>
        <authorList>
            <person name="Smith M.F."/>
            <person name="Patton J.L."/>
        </authorList>
    </citation>
    <scope>NUCLEOTIDE SEQUENCE [GENOMIC DNA] OF 1-133</scope>
    <source>
        <strain>Isolate MVZ 173038</strain>
        <strain>Isolate MVZ 173039</strain>
        <tissue>Liver</tissue>
    </source>
</reference>
<sequence>MKVLRKNHPLLKIVNHSFIDLPTPSNISSWWNFGSLLGTCLVIQILTGLFLAMHYTSDTTTAFSSVAHICRDVNYGWLIRYLHANGASMFFICLFIHVGRGIYYGSYILSETWNIGIILFLTTMATAFVGYVLPWGQMSFWGATVITNLLSAIPYIGNTLVEWIWGGFSVDKATLTRFFAFHFILPFIITALALVHLLFLHETGSNNPSGLNSDSDKIPFHPYYTTKDLLGIFLLLLVLMILALFFPDVLGDPDNFTPANPLNTPAHIKPEWYFLFAYAILRSIPNKLGGVLALILSILILAAFPLLNTSKQHGLIFRPVTQVIYWIFIANLLVLTWIGGQPVEYPFTMIGQIASITYFTIIIILMPVSNTIENNIIKL</sequence>
<protein>
    <recommendedName>
        <fullName>Cytochrome b</fullName>
    </recommendedName>
    <alternativeName>
        <fullName>Complex III subunit 3</fullName>
    </alternativeName>
    <alternativeName>
        <fullName>Complex III subunit III</fullName>
    </alternativeName>
    <alternativeName>
        <fullName>Cytochrome b-c1 complex subunit 3</fullName>
    </alternativeName>
    <alternativeName>
        <fullName>Ubiquinol-cytochrome-c reductase complex cytochrome b subunit</fullName>
    </alternativeName>
</protein>
<geneLocation type="mitochondrion"/>
<keyword id="KW-0249">Electron transport</keyword>
<keyword id="KW-0349">Heme</keyword>
<keyword id="KW-0408">Iron</keyword>
<keyword id="KW-0472">Membrane</keyword>
<keyword id="KW-0479">Metal-binding</keyword>
<keyword id="KW-0496">Mitochondrion</keyword>
<keyword id="KW-0999">Mitochondrion inner membrane</keyword>
<keyword id="KW-0679">Respiratory chain</keyword>
<keyword id="KW-0812">Transmembrane</keyword>
<keyword id="KW-1133">Transmembrane helix</keyword>
<keyword id="KW-0813">Transport</keyword>
<keyword id="KW-0830">Ubiquinone</keyword>
<comment type="function">
    <text evidence="2">Component of the ubiquinol-cytochrome c reductase complex (complex III or cytochrome b-c1 complex) that is part of the mitochondrial respiratory chain. The b-c1 complex mediates electron transfer from ubiquinol to cytochrome c. Contributes to the generation of a proton gradient across the mitochondrial membrane that is then used for ATP synthesis.</text>
</comment>
<comment type="cofactor">
    <cofactor evidence="2">
        <name>heme b</name>
        <dbReference type="ChEBI" id="CHEBI:60344"/>
    </cofactor>
    <text evidence="2">Binds 2 heme b groups non-covalently.</text>
</comment>
<comment type="subunit">
    <text evidence="2">The cytochrome bc1 complex contains 11 subunits: 3 respiratory subunits (MT-CYB, CYC1 and UQCRFS1), 2 core proteins (UQCRC1 and UQCRC2) and 6 low-molecular weight proteins (UQCRH/QCR6, UQCRB/QCR7, UQCRQ/QCR8, UQCR10/QCR9, UQCR11/QCR10 and a cleavage product of UQCRFS1). This cytochrome bc1 complex then forms a dimer.</text>
</comment>
<comment type="subcellular location">
    <subcellularLocation>
        <location evidence="2">Mitochondrion inner membrane</location>
        <topology evidence="2">Multi-pass membrane protein</topology>
    </subcellularLocation>
</comment>
<comment type="miscellaneous">
    <text evidence="1">Heme 1 (or BL or b562) is low-potential and absorbs at about 562 nm, and heme 2 (or BH or b566) is high-potential and absorbs at about 566 nm.</text>
</comment>
<comment type="similarity">
    <text evidence="3 4">Belongs to the cytochrome b family.</text>
</comment>
<comment type="caution">
    <text evidence="2">The full-length protein contains only eight transmembrane helices, not nine as predicted by bioinformatics tools.</text>
</comment>
<gene>
    <name type="primary">MT-CYB</name>
    <name type="synonym">COB</name>
    <name type="synonym">CYTB</name>
    <name type="synonym">MTCYB</name>
</gene>
<dbReference type="EMBL" id="M35698">
    <property type="protein sequence ID" value="AAA16984.2"/>
    <property type="molecule type" value="Genomic_DNA"/>
</dbReference>
<dbReference type="PIR" id="E23725">
    <property type="entry name" value="E23725"/>
</dbReference>
<dbReference type="SMR" id="P21716"/>
<dbReference type="GO" id="GO:0005743">
    <property type="term" value="C:mitochondrial inner membrane"/>
    <property type="evidence" value="ECO:0007669"/>
    <property type="project" value="UniProtKB-SubCell"/>
</dbReference>
<dbReference type="GO" id="GO:0045275">
    <property type="term" value="C:respiratory chain complex III"/>
    <property type="evidence" value="ECO:0007669"/>
    <property type="project" value="InterPro"/>
</dbReference>
<dbReference type="GO" id="GO:0046872">
    <property type="term" value="F:metal ion binding"/>
    <property type="evidence" value="ECO:0007669"/>
    <property type="project" value="UniProtKB-KW"/>
</dbReference>
<dbReference type="GO" id="GO:0008121">
    <property type="term" value="F:ubiquinol-cytochrome-c reductase activity"/>
    <property type="evidence" value="ECO:0007669"/>
    <property type="project" value="InterPro"/>
</dbReference>
<dbReference type="GO" id="GO:0006122">
    <property type="term" value="P:mitochondrial electron transport, ubiquinol to cytochrome c"/>
    <property type="evidence" value="ECO:0007669"/>
    <property type="project" value="TreeGrafter"/>
</dbReference>
<dbReference type="CDD" id="cd00290">
    <property type="entry name" value="cytochrome_b_C"/>
    <property type="match status" value="1"/>
</dbReference>
<dbReference type="CDD" id="cd00284">
    <property type="entry name" value="Cytochrome_b_N"/>
    <property type="match status" value="1"/>
</dbReference>
<dbReference type="FunFam" id="1.20.810.10:FF:000002">
    <property type="entry name" value="Cytochrome b"/>
    <property type="match status" value="1"/>
</dbReference>
<dbReference type="Gene3D" id="1.20.810.10">
    <property type="entry name" value="Cytochrome Bc1 Complex, Chain C"/>
    <property type="match status" value="1"/>
</dbReference>
<dbReference type="InterPro" id="IPR005798">
    <property type="entry name" value="Cyt_b/b6_C"/>
</dbReference>
<dbReference type="InterPro" id="IPR036150">
    <property type="entry name" value="Cyt_b/b6_C_sf"/>
</dbReference>
<dbReference type="InterPro" id="IPR005797">
    <property type="entry name" value="Cyt_b/b6_N"/>
</dbReference>
<dbReference type="InterPro" id="IPR027387">
    <property type="entry name" value="Cytb/b6-like_sf"/>
</dbReference>
<dbReference type="InterPro" id="IPR030689">
    <property type="entry name" value="Cytochrome_b"/>
</dbReference>
<dbReference type="InterPro" id="IPR048260">
    <property type="entry name" value="Cytochrome_b_C_euk/bac"/>
</dbReference>
<dbReference type="InterPro" id="IPR048259">
    <property type="entry name" value="Cytochrome_b_N_euk/bac"/>
</dbReference>
<dbReference type="InterPro" id="IPR016174">
    <property type="entry name" value="Di-haem_cyt_TM"/>
</dbReference>
<dbReference type="PANTHER" id="PTHR19271">
    <property type="entry name" value="CYTOCHROME B"/>
    <property type="match status" value="1"/>
</dbReference>
<dbReference type="PANTHER" id="PTHR19271:SF16">
    <property type="entry name" value="CYTOCHROME B"/>
    <property type="match status" value="1"/>
</dbReference>
<dbReference type="Pfam" id="PF00032">
    <property type="entry name" value="Cytochrom_B_C"/>
    <property type="match status" value="1"/>
</dbReference>
<dbReference type="Pfam" id="PF00033">
    <property type="entry name" value="Cytochrome_B"/>
    <property type="match status" value="1"/>
</dbReference>
<dbReference type="PIRSF" id="PIRSF038885">
    <property type="entry name" value="COB"/>
    <property type="match status" value="1"/>
</dbReference>
<dbReference type="SUPFAM" id="SSF81648">
    <property type="entry name" value="a domain/subunit of cytochrome bc1 complex (Ubiquinol-cytochrome c reductase)"/>
    <property type="match status" value="1"/>
</dbReference>
<dbReference type="SUPFAM" id="SSF81342">
    <property type="entry name" value="Transmembrane di-heme cytochromes"/>
    <property type="match status" value="1"/>
</dbReference>
<dbReference type="PROSITE" id="PS51003">
    <property type="entry name" value="CYTB_CTER"/>
    <property type="match status" value="1"/>
</dbReference>
<dbReference type="PROSITE" id="PS51002">
    <property type="entry name" value="CYTB_NTER"/>
    <property type="match status" value="1"/>
</dbReference>